<dbReference type="EC" id="2.1.3.2" evidence="1"/>
<dbReference type="EMBL" id="CP000233">
    <property type="protein sequence ID" value="ABD99005.1"/>
    <property type="molecule type" value="Genomic_DNA"/>
</dbReference>
<dbReference type="RefSeq" id="WP_003701970.1">
    <property type="nucleotide sequence ID" value="NC_007929.1"/>
</dbReference>
<dbReference type="RefSeq" id="YP_535088.1">
    <property type="nucleotide sequence ID" value="NC_007929.1"/>
</dbReference>
<dbReference type="SMR" id="Q1WVB2"/>
<dbReference type="STRING" id="362948.LSL_0190"/>
<dbReference type="KEGG" id="lsl:LSL_0190"/>
<dbReference type="PATRIC" id="fig|362948.14.peg.267"/>
<dbReference type="HOGENOM" id="CLU_043846_2_1_9"/>
<dbReference type="OrthoDB" id="9774690at2"/>
<dbReference type="UniPathway" id="UPA00070">
    <property type="reaction ID" value="UER00116"/>
</dbReference>
<dbReference type="Proteomes" id="UP000006559">
    <property type="component" value="Chromosome"/>
</dbReference>
<dbReference type="GO" id="GO:0005829">
    <property type="term" value="C:cytosol"/>
    <property type="evidence" value="ECO:0007669"/>
    <property type="project" value="TreeGrafter"/>
</dbReference>
<dbReference type="GO" id="GO:0016597">
    <property type="term" value="F:amino acid binding"/>
    <property type="evidence" value="ECO:0007669"/>
    <property type="project" value="InterPro"/>
</dbReference>
<dbReference type="GO" id="GO:0004070">
    <property type="term" value="F:aspartate carbamoyltransferase activity"/>
    <property type="evidence" value="ECO:0007669"/>
    <property type="project" value="UniProtKB-UniRule"/>
</dbReference>
<dbReference type="GO" id="GO:0006207">
    <property type="term" value="P:'de novo' pyrimidine nucleobase biosynthetic process"/>
    <property type="evidence" value="ECO:0007669"/>
    <property type="project" value="InterPro"/>
</dbReference>
<dbReference type="GO" id="GO:0044205">
    <property type="term" value="P:'de novo' UMP biosynthetic process"/>
    <property type="evidence" value="ECO:0007669"/>
    <property type="project" value="UniProtKB-UniRule"/>
</dbReference>
<dbReference type="GO" id="GO:0006520">
    <property type="term" value="P:amino acid metabolic process"/>
    <property type="evidence" value="ECO:0007669"/>
    <property type="project" value="InterPro"/>
</dbReference>
<dbReference type="FunFam" id="3.40.50.1370:FF:000011">
    <property type="entry name" value="Aspartate carbamoyltransferase"/>
    <property type="match status" value="1"/>
</dbReference>
<dbReference type="Gene3D" id="3.40.50.1370">
    <property type="entry name" value="Aspartate/ornithine carbamoyltransferase"/>
    <property type="match status" value="2"/>
</dbReference>
<dbReference type="HAMAP" id="MF_00001">
    <property type="entry name" value="Asp_carb_tr"/>
    <property type="match status" value="1"/>
</dbReference>
<dbReference type="InterPro" id="IPR006132">
    <property type="entry name" value="Asp/Orn_carbamoyltranf_P-bd"/>
</dbReference>
<dbReference type="InterPro" id="IPR006130">
    <property type="entry name" value="Asp/Orn_carbamoylTrfase"/>
</dbReference>
<dbReference type="InterPro" id="IPR036901">
    <property type="entry name" value="Asp/Orn_carbamoylTrfase_sf"/>
</dbReference>
<dbReference type="InterPro" id="IPR002082">
    <property type="entry name" value="Asp_carbamoyltransf"/>
</dbReference>
<dbReference type="InterPro" id="IPR006131">
    <property type="entry name" value="Asp_carbamoyltransf_Asp/Orn-bd"/>
</dbReference>
<dbReference type="NCBIfam" id="TIGR00670">
    <property type="entry name" value="asp_carb_tr"/>
    <property type="match status" value="1"/>
</dbReference>
<dbReference type="NCBIfam" id="NF002032">
    <property type="entry name" value="PRK00856.1"/>
    <property type="match status" value="1"/>
</dbReference>
<dbReference type="PANTHER" id="PTHR45753:SF6">
    <property type="entry name" value="ASPARTATE CARBAMOYLTRANSFERASE"/>
    <property type="match status" value="1"/>
</dbReference>
<dbReference type="PANTHER" id="PTHR45753">
    <property type="entry name" value="ORNITHINE CARBAMOYLTRANSFERASE, MITOCHONDRIAL"/>
    <property type="match status" value="1"/>
</dbReference>
<dbReference type="Pfam" id="PF00185">
    <property type="entry name" value="OTCace"/>
    <property type="match status" value="1"/>
</dbReference>
<dbReference type="Pfam" id="PF02729">
    <property type="entry name" value="OTCace_N"/>
    <property type="match status" value="1"/>
</dbReference>
<dbReference type="PRINTS" id="PR00100">
    <property type="entry name" value="AOTCASE"/>
</dbReference>
<dbReference type="PRINTS" id="PR00101">
    <property type="entry name" value="ATCASE"/>
</dbReference>
<dbReference type="SUPFAM" id="SSF53671">
    <property type="entry name" value="Aspartate/ornithine carbamoyltransferase"/>
    <property type="match status" value="1"/>
</dbReference>
<dbReference type="PROSITE" id="PS00097">
    <property type="entry name" value="CARBAMOYLTRANSFERASE"/>
    <property type="match status" value="1"/>
</dbReference>
<feature type="chain" id="PRO_0000321113" description="Aspartate carbamoyltransferase catalytic subunit">
    <location>
        <begin position="1"/>
        <end position="316"/>
    </location>
</feature>
<feature type="binding site" evidence="1">
    <location>
        <position position="56"/>
    </location>
    <ligand>
        <name>carbamoyl phosphate</name>
        <dbReference type="ChEBI" id="CHEBI:58228"/>
    </ligand>
</feature>
<feature type="binding site" evidence="1">
    <location>
        <position position="57"/>
    </location>
    <ligand>
        <name>carbamoyl phosphate</name>
        <dbReference type="ChEBI" id="CHEBI:58228"/>
    </ligand>
</feature>
<feature type="binding site" evidence="1">
    <location>
        <position position="84"/>
    </location>
    <ligand>
        <name>L-aspartate</name>
        <dbReference type="ChEBI" id="CHEBI:29991"/>
    </ligand>
</feature>
<feature type="binding site" evidence="1">
    <location>
        <position position="106"/>
    </location>
    <ligand>
        <name>carbamoyl phosphate</name>
        <dbReference type="ChEBI" id="CHEBI:58228"/>
    </ligand>
</feature>
<feature type="binding site" evidence="1">
    <location>
        <position position="139"/>
    </location>
    <ligand>
        <name>carbamoyl phosphate</name>
        <dbReference type="ChEBI" id="CHEBI:58228"/>
    </ligand>
</feature>
<feature type="binding site" evidence="1">
    <location>
        <position position="142"/>
    </location>
    <ligand>
        <name>carbamoyl phosphate</name>
        <dbReference type="ChEBI" id="CHEBI:58228"/>
    </ligand>
</feature>
<feature type="binding site" evidence="1">
    <location>
        <position position="172"/>
    </location>
    <ligand>
        <name>L-aspartate</name>
        <dbReference type="ChEBI" id="CHEBI:29991"/>
    </ligand>
</feature>
<feature type="binding site" evidence="1">
    <location>
        <position position="224"/>
    </location>
    <ligand>
        <name>L-aspartate</name>
        <dbReference type="ChEBI" id="CHEBI:29991"/>
    </ligand>
</feature>
<feature type="binding site" evidence="1">
    <location>
        <position position="268"/>
    </location>
    <ligand>
        <name>carbamoyl phosphate</name>
        <dbReference type="ChEBI" id="CHEBI:58228"/>
    </ligand>
</feature>
<feature type="binding site" evidence="1">
    <location>
        <position position="269"/>
    </location>
    <ligand>
        <name>carbamoyl phosphate</name>
        <dbReference type="ChEBI" id="CHEBI:58228"/>
    </ligand>
</feature>
<reference key="1">
    <citation type="journal article" date="2006" name="Proc. Natl. Acad. Sci. U.S.A.">
        <title>Multireplicon genome architecture of Lactobacillus salivarius.</title>
        <authorList>
            <person name="Claesson M.J."/>
            <person name="Li Y."/>
            <person name="Leahy S."/>
            <person name="Canchaya C."/>
            <person name="van Pijkeren J.P."/>
            <person name="Cerdeno-Tarraga A.M."/>
            <person name="Parkhill J."/>
            <person name="Flynn S."/>
            <person name="O'Sullivan G.C."/>
            <person name="Collins J.K."/>
            <person name="Higgins D."/>
            <person name="Shanahan F."/>
            <person name="Fitzgerald G.F."/>
            <person name="van Sinderen D."/>
            <person name="O'Toole P.W."/>
        </authorList>
    </citation>
    <scope>NUCLEOTIDE SEQUENCE [LARGE SCALE GENOMIC DNA]</scope>
    <source>
        <strain>UCC118</strain>
    </source>
</reference>
<name>PYRB_LIGS1</name>
<proteinExistence type="inferred from homology"/>
<gene>
    <name evidence="1" type="primary">pyrB</name>
    <name type="ordered locus">LSL_0190</name>
</gene>
<evidence type="ECO:0000255" key="1">
    <source>
        <dbReference type="HAMAP-Rule" id="MF_00001"/>
    </source>
</evidence>
<organism>
    <name type="scientific">Ligilactobacillus salivarius (strain UCC118)</name>
    <name type="common">Lactobacillus salivarius</name>
    <dbReference type="NCBI Taxonomy" id="362948"/>
    <lineage>
        <taxon>Bacteria</taxon>
        <taxon>Bacillati</taxon>
        <taxon>Bacillota</taxon>
        <taxon>Bacilli</taxon>
        <taxon>Lactobacillales</taxon>
        <taxon>Lactobacillaceae</taxon>
        <taxon>Ligilactobacillus</taxon>
    </lineage>
</organism>
<accession>Q1WVB2</accession>
<keyword id="KW-0665">Pyrimidine biosynthesis</keyword>
<keyword id="KW-1185">Reference proteome</keyword>
<keyword id="KW-0808">Transferase</keyword>
<comment type="function">
    <text evidence="1">Catalyzes the condensation of carbamoyl phosphate and aspartate to form carbamoyl aspartate and inorganic phosphate, the committed step in the de novo pyrimidine nucleotide biosynthesis pathway.</text>
</comment>
<comment type="catalytic activity">
    <reaction evidence="1">
        <text>carbamoyl phosphate + L-aspartate = N-carbamoyl-L-aspartate + phosphate + H(+)</text>
        <dbReference type="Rhea" id="RHEA:20013"/>
        <dbReference type="ChEBI" id="CHEBI:15378"/>
        <dbReference type="ChEBI" id="CHEBI:29991"/>
        <dbReference type="ChEBI" id="CHEBI:32814"/>
        <dbReference type="ChEBI" id="CHEBI:43474"/>
        <dbReference type="ChEBI" id="CHEBI:58228"/>
        <dbReference type="EC" id="2.1.3.2"/>
    </reaction>
</comment>
<comment type="pathway">
    <text evidence="1">Pyrimidine metabolism; UMP biosynthesis via de novo pathway; (S)-dihydroorotate from bicarbonate: step 2/3.</text>
</comment>
<comment type="subunit">
    <text evidence="1">Heterododecamer (2C3:3R2) of six catalytic PyrB chains organized as two trimers (C3), and six regulatory PyrI chains organized as three dimers (R2).</text>
</comment>
<comment type="similarity">
    <text evidence="1">Belongs to the aspartate/ornithine carbamoyltransferase superfamily. ATCase family.</text>
</comment>
<protein>
    <recommendedName>
        <fullName evidence="1">Aspartate carbamoyltransferase catalytic subunit</fullName>
        <ecNumber evidence="1">2.1.3.2</ecNumber>
    </recommendedName>
    <alternativeName>
        <fullName evidence="1">Aspartate transcarbamylase</fullName>
        <shortName evidence="1">ATCase</shortName>
    </alternativeName>
</protein>
<sequence>MDKLLSLNNFVSVENLENEDVEKLIKRAEYFKNGGEAPHLNKEVYVANLFFENSTRTHTSFEMAERKLGLTVIPFDPGHSSVNKGETLYDTLLTLGALGVDLSVIRHSENNYYEKLINLNPDQHLNMGIINGGDGSGQHPSQCMLDIMTIHEQFGTFKGLKVVIVGDLKNSRVARSNMQLLTRLGAKVYFSGPEYWYSSEFDKYGEYAPLDELIEDMDVVMLLRVQHERHDGDKNEKLFSETEYHKLYGLDEKRYNKLKKDAIIMHPGPVNRGVEWADELVEAPKSRYVTQMKNGVFMRMAMIEAVMRGRKLGGLE</sequence>